<keyword id="KW-0119">Carbohydrate metabolism</keyword>
<keyword id="KW-0456">Lyase</keyword>
<comment type="function">
    <text evidence="1">Specifically catalyzes the cleavage of the D-lactyl ether substituent of MurNAc 6-phosphate, producing GlcNAc 6-phosphate and D-lactate.</text>
</comment>
<comment type="catalytic activity">
    <reaction evidence="1">
        <text>N-acetyl-D-muramate 6-phosphate + H2O = N-acetyl-D-glucosamine 6-phosphate + (R)-lactate</text>
        <dbReference type="Rhea" id="RHEA:26410"/>
        <dbReference type="ChEBI" id="CHEBI:15377"/>
        <dbReference type="ChEBI" id="CHEBI:16004"/>
        <dbReference type="ChEBI" id="CHEBI:57513"/>
        <dbReference type="ChEBI" id="CHEBI:58722"/>
        <dbReference type="EC" id="4.2.1.126"/>
    </reaction>
</comment>
<comment type="pathway">
    <text evidence="1">Amino-sugar metabolism; N-acetylmuramate degradation.</text>
</comment>
<comment type="subunit">
    <text evidence="1">Homodimer.</text>
</comment>
<comment type="miscellaneous">
    <text evidence="1">A lyase-type mechanism (elimination/hydration) is suggested for the cleavage of the lactyl ether bond of MurNAc 6-phosphate, with the formation of an alpha,beta-unsaturated aldehyde intermediate with (E)-stereochemistry, followed by the syn addition of water to give product.</text>
</comment>
<comment type="similarity">
    <text evidence="1">Belongs to the GCKR-like family. MurNAc-6-P etherase subfamily.</text>
</comment>
<dbReference type="EC" id="4.2.1.126" evidence="1"/>
<dbReference type="EMBL" id="AE017262">
    <property type="protein sequence ID" value="AAT04455.1"/>
    <property type="molecule type" value="Genomic_DNA"/>
</dbReference>
<dbReference type="RefSeq" id="WP_003726267.1">
    <property type="nucleotide sequence ID" value="NC_002973.6"/>
</dbReference>
<dbReference type="SMR" id="Q71Z09"/>
<dbReference type="KEGG" id="lmf:LMOf2365_1682"/>
<dbReference type="HOGENOM" id="CLU_049049_1_1_9"/>
<dbReference type="UniPathway" id="UPA00342"/>
<dbReference type="GO" id="GO:0097367">
    <property type="term" value="F:carbohydrate derivative binding"/>
    <property type="evidence" value="ECO:0007669"/>
    <property type="project" value="InterPro"/>
</dbReference>
<dbReference type="GO" id="GO:0016835">
    <property type="term" value="F:carbon-oxygen lyase activity"/>
    <property type="evidence" value="ECO:0007669"/>
    <property type="project" value="UniProtKB-UniRule"/>
</dbReference>
<dbReference type="GO" id="GO:0016803">
    <property type="term" value="F:ether hydrolase activity"/>
    <property type="evidence" value="ECO:0007669"/>
    <property type="project" value="TreeGrafter"/>
</dbReference>
<dbReference type="GO" id="GO:0046348">
    <property type="term" value="P:amino sugar catabolic process"/>
    <property type="evidence" value="ECO:0007669"/>
    <property type="project" value="InterPro"/>
</dbReference>
<dbReference type="GO" id="GO:0097173">
    <property type="term" value="P:N-acetylmuramic acid catabolic process"/>
    <property type="evidence" value="ECO:0007669"/>
    <property type="project" value="UniProtKB-UniPathway"/>
</dbReference>
<dbReference type="GO" id="GO:0009254">
    <property type="term" value="P:peptidoglycan turnover"/>
    <property type="evidence" value="ECO:0007669"/>
    <property type="project" value="TreeGrafter"/>
</dbReference>
<dbReference type="CDD" id="cd05007">
    <property type="entry name" value="SIS_Etherase"/>
    <property type="match status" value="1"/>
</dbReference>
<dbReference type="FunFam" id="1.10.8.1080:FF:000001">
    <property type="entry name" value="N-acetylmuramic acid 6-phosphate etherase"/>
    <property type="match status" value="1"/>
</dbReference>
<dbReference type="FunFam" id="3.40.50.10490:FF:000014">
    <property type="entry name" value="N-acetylmuramic acid 6-phosphate etherase"/>
    <property type="match status" value="1"/>
</dbReference>
<dbReference type="Gene3D" id="1.10.8.1080">
    <property type="match status" value="1"/>
</dbReference>
<dbReference type="Gene3D" id="3.40.50.10490">
    <property type="entry name" value="Glucose-6-phosphate isomerase like protein, domain 1"/>
    <property type="match status" value="1"/>
</dbReference>
<dbReference type="HAMAP" id="MF_00068">
    <property type="entry name" value="MurQ"/>
    <property type="match status" value="1"/>
</dbReference>
<dbReference type="InterPro" id="IPR005488">
    <property type="entry name" value="Etherase_MurQ"/>
</dbReference>
<dbReference type="InterPro" id="IPR005486">
    <property type="entry name" value="Glucokinase_regulatory_CS"/>
</dbReference>
<dbReference type="InterPro" id="IPR040190">
    <property type="entry name" value="MURQ/GCKR"/>
</dbReference>
<dbReference type="InterPro" id="IPR001347">
    <property type="entry name" value="SIS_dom"/>
</dbReference>
<dbReference type="InterPro" id="IPR046348">
    <property type="entry name" value="SIS_dom_sf"/>
</dbReference>
<dbReference type="NCBIfam" id="TIGR00274">
    <property type="entry name" value="N-acetylmuramic acid 6-phosphate etherase"/>
    <property type="match status" value="1"/>
</dbReference>
<dbReference type="NCBIfam" id="NF003915">
    <property type="entry name" value="PRK05441.1"/>
    <property type="match status" value="1"/>
</dbReference>
<dbReference type="NCBIfam" id="NF009222">
    <property type="entry name" value="PRK12570.1"/>
    <property type="match status" value="1"/>
</dbReference>
<dbReference type="PANTHER" id="PTHR10088">
    <property type="entry name" value="GLUCOKINASE REGULATORY PROTEIN"/>
    <property type="match status" value="1"/>
</dbReference>
<dbReference type="PANTHER" id="PTHR10088:SF4">
    <property type="entry name" value="GLUCOKINASE REGULATORY PROTEIN"/>
    <property type="match status" value="1"/>
</dbReference>
<dbReference type="Pfam" id="PF22645">
    <property type="entry name" value="GKRP_SIS_N"/>
    <property type="match status" value="1"/>
</dbReference>
<dbReference type="SUPFAM" id="SSF53697">
    <property type="entry name" value="SIS domain"/>
    <property type="match status" value="1"/>
</dbReference>
<dbReference type="PROSITE" id="PS01272">
    <property type="entry name" value="GCKR"/>
    <property type="match status" value="1"/>
</dbReference>
<dbReference type="PROSITE" id="PS51464">
    <property type="entry name" value="SIS"/>
    <property type="match status" value="1"/>
</dbReference>
<evidence type="ECO:0000255" key="1">
    <source>
        <dbReference type="HAMAP-Rule" id="MF_00068"/>
    </source>
</evidence>
<feature type="chain" id="PRO_0000249634" description="N-acetylmuramic acid 6-phosphate etherase">
    <location>
        <begin position="1"/>
        <end position="296"/>
    </location>
</feature>
<feature type="domain" description="SIS" evidence="1">
    <location>
        <begin position="54"/>
        <end position="217"/>
    </location>
</feature>
<feature type="active site" description="Proton donor" evidence="1">
    <location>
        <position position="82"/>
    </location>
</feature>
<feature type="active site" evidence="1">
    <location>
        <position position="113"/>
    </location>
</feature>
<proteinExistence type="inferred from homology"/>
<reference key="1">
    <citation type="journal article" date="2004" name="Nucleic Acids Res.">
        <title>Whole genome comparisons of serotype 4b and 1/2a strains of the food-borne pathogen Listeria monocytogenes reveal new insights into the core genome components of this species.</title>
        <authorList>
            <person name="Nelson K.E."/>
            <person name="Fouts D.E."/>
            <person name="Mongodin E.F."/>
            <person name="Ravel J."/>
            <person name="DeBoy R.T."/>
            <person name="Kolonay J.F."/>
            <person name="Rasko D.A."/>
            <person name="Angiuoli S.V."/>
            <person name="Gill S.R."/>
            <person name="Paulsen I.T."/>
            <person name="Peterson J.D."/>
            <person name="White O."/>
            <person name="Nelson W.C."/>
            <person name="Nierman W.C."/>
            <person name="Beanan M.J."/>
            <person name="Brinkac L.M."/>
            <person name="Daugherty S.C."/>
            <person name="Dodson R.J."/>
            <person name="Durkin A.S."/>
            <person name="Madupu R."/>
            <person name="Haft D.H."/>
            <person name="Selengut J."/>
            <person name="Van Aken S.E."/>
            <person name="Khouri H.M."/>
            <person name="Fedorova N."/>
            <person name="Forberger H.A."/>
            <person name="Tran B."/>
            <person name="Kathariou S."/>
            <person name="Wonderling L.D."/>
            <person name="Uhlich G.A."/>
            <person name="Bayles D.O."/>
            <person name="Luchansky J.B."/>
            <person name="Fraser C.M."/>
        </authorList>
    </citation>
    <scope>NUCLEOTIDE SEQUENCE [LARGE SCALE GENOMIC DNA]</scope>
    <source>
        <strain>F2365</strain>
    </source>
</reference>
<accession>Q71Z09</accession>
<protein>
    <recommendedName>
        <fullName evidence="1">N-acetylmuramic acid 6-phosphate etherase</fullName>
        <shortName evidence="1">MurNAc-6-P etherase</shortName>
        <ecNumber evidence="1">4.2.1.126</ecNumber>
    </recommendedName>
    <alternativeName>
        <fullName evidence="1">N-acetylmuramic acid 6-phosphate hydrolase</fullName>
    </alternativeName>
    <alternativeName>
        <fullName evidence="1">N-acetylmuramic acid 6-phosphate lyase</fullName>
    </alternativeName>
</protein>
<name>MURQ_LISMF</name>
<organism>
    <name type="scientific">Listeria monocytogenes serotype 4b (strain F2365)</name>
    <dbReference type="NCBI Taxonomy" id="265669"/>
    <lineage>
        <taxon>Bacteria</taxon>
        <taxon>Bacillati</taxon>
        <taxon>Bacillota</taxon>
        <taxon>Bacilli</taxon>
        <taxon>Bacillales</taxon>
        <taxon>Listeriaceae</taxon>
        <taxon>Listeria</taxon>
    </lineage>
</organism>
<sequence length="296" mass="31525">MLENLATEERNEKTIDLDTLSPKEILAVMNEEDLTVPIAIKKVLPQIELIVSGVISCFQKGGRLIYLGAGTSGRLGVLDAAECVPTFGVSKEQVIGLIAGGEKAFVAAIEGAEDSKILGENDLKQIKLTANDFVIGIAASGRTPYVIGALDYAKSVGAKTGAISCNANAKISAHADIAVEVVTGAEILTGSTRLKAGTAQKLVLNMISTASMVGIGKVYKNLMVDVLPTNKKLEERSKRIIMEATEADYETANKFYEAAEKHVKVAIVMILTNSTKEIALEKLSEAKGFVRNTIQK</sequence>
<gene>
    <name evidence="1" type="primary">murQ</name>
    <name type="ordered locus">LMOf2365_1682</name>
</gene>